<name>RPOA_SYNE7</name>
<protein>
    <recommendedName>
        <fullName evidence="1">DNA-directed RNA polymerase subunit alpha</fullName>
        <shortName evidence="1">RNAP subunit alpha</shortName>
        <ecNumber evidence="1">2.7.7.6</ecNumber>
    </recommendedName>
    <alternativeName>
        <fullName evidence="1">RNA polymerase subunit alpha</fullName>
    </alternativeName>
    <alternativeName>
        <fullName evidence="1">Transcriptase subunit alpha</fullName>
    </alternativeName>
</protein>
<dbReference type="EC" id="2.7.7.6" evidence="1"/>
<dbReference type="EMBL" id="CP000100">
    <property type="protein sequence ID" value="ABB58239.1"/>
    <property type="molecule type" value="Genomic_DNA"/>
</dbReference>
<dbReference type="RefSeq" id="WP_011244198.1">
    <property type="nucleotide sequence ID" value="NZ_JACJTX010000001.1"/>
</dbReference>
<dbReference type="PDB" id="8SYI">
    <property type="method" value="EM"/>
    <property type="resolution" value="2.94 A"/>
    <property type="chains" value="A/B=1-309"/>
</dbReference>
<dbReference type="PDB" id="8URW">
    <property type="method" value="EM"/>
    <property type="resolution" value="2.79 A"/>
    <property type="chains" value="A/B=1-309"/>
</dbReference>
<dbReference type="PDBsum" id="8SYI"/>
<dbReference type="PDBsum" id="8URW"/>
<dbReference type="EMDB" id="EMD-40874"/>
<dbReference type="EMDB" id="EMD-42502"/>
<dbReference type="SMR" id="Q31L30"/>
<dbReference type="STRING" id="1140.Synpcc7942_2209"/>
<dbReference type="PaxDb" id="1140-Synpcc7942_2209"/>
<dbReference type="KEGG" id="syf:Synpcc7942_2209"/>
<dbReference type="eggNOG" id="COG0202">
    <property type="taxonomic scope" value="Bacteria"/>
</dbReference>
<dbReference type="HOGENOM" id="CLU_053084_0_1_3"/>
<dbReference type="OrthoDB" id="9805706at2"/>
<dbReference type="BioCyc" id="SYNEL:SYNPCC7942_2209-MONOMER"/>
<dbReference type="Proteomes" id="UP000889800">
    <property type="component" value="Chromosome"/>
</dbReference>
<dbReference type="GO" id="GO:0005737">
    <property type="term" value="C:cytoplasm"/>
    <property type="evidence" value="ECO:0007669"/>
    <property type="project" value="UniProtKB-ARBA"/>
</dbReference>
<dbReference type="GO" id="GO:0000428">
    <property type="term" value="C:DNA-directed RNA polymerase complex"/>
    <property type="evidence" value="ECO:0007669"/>
    <property type="project" value="UniProtKB-KW"/>
</dbReference>
<dbReference type="GO" id="GO:0003677">
    <property type="term" value="F:DNA binding"/>
    <property type="evidence" value="ECO:0007669"/>
    <property type="project" value="UniProtKB-UniRule"/>
</dbReference>
<dbReference type="GO" id="GO:0003899">
    <property type="term" value="F:DNA-directed RNA polymerase activity"/>
    <property type="evidence" value="ECO:0007669"/>
    <property type="project" value="UniProtKB-UniRule"/>
</dbReference>
<dbReference type="GO" id="GO:0046983">
    <property type="term" value="F:protein dimerization activity"/>
    <property type="evidence" value="ECO:0007669"/>
    <property type="project" value="InterPro"/>
</dbReference>
<dbReference type="GO" id="GO:0006351">
    <property type="term" value="P:DNA-templated transcription"/>
    <property type="evidence" value="ECO:0007669"/>
    <property type="project" value="UniProtKB-UniRule"/>
</dbReference>
<dbReference type="CDD" id="cd06928">
    <property type="entry name" value="RNAP_alpha_NTD"/>
    <property type="match status" value="1"/>
</dbReference>
<dbReference type="FunFam" id="2.170.120.12:FF:000001">
    <property type="entry name" value="DNA-directed RNA polymerase subunit alpha"/>
    <property type="match status" value="1"/>
</dbReference>
<dbReference type="Gene3D" id="1.10.150.20">
    <property type="entry name" value="5' to 3' exonuclease, C-terminal subdomain"/>
    <property type="match status" value="1"/>
</dbReference>
<dbReference type="Gene3D" id="2.170.120.12">
    <property type="entry name" value="DNA-directed RNA polymerase, insert domain"/>
    <property type="match status" value="1"/>
</dbReference>
<dbReference type="Gene3D" id="3.30.1360.10">
    <property type="entry name" value="RNA polymerase, RBP11-like subunit"/>
    <property type="match status" value="1"/>
</dbReference>
<dbReference type="HAMAP" id="MF_00059">
    <property type="entry name" value="RNApol_bact_RpoA"/>
    <property type="match status" value="1"/>
</dbReference>
<dbReference type="InterPro" id="IPR011262">
    <property type="entry name" value="DNA-dir_RNA_pol_insert"/>
</dbReference>
<dbReference type="InterPro" id="IPR011263">
    <property type="entry name" value="DNA-dir_RNA_pol_RpoA/D/Rpb3"/>
</dbReference>
<dbReference type="InterPro" id="IPR011773">
    <property type="entry name" value="DNA-dir_RpoA"/>
</dbReference>
<dbReference type="InterPro" id="IPR036603">
    <property type="entry name" value="RBP11-like"/>
</dbReference>
<dbReference type="InterPro" id="IPR011260">
    <property type="entry name" value="RNAP_asu_C"/>
</dbReference>
<dbReference type="InterPro" id="IPR036643">
    <property type="entry name" value="RNApol_insert_sf"/>
</dbReference>
<dbReference type="NCBIfam" id="NF003513">
    <property type="entry name" value="PRK05182.1-2"/>
    <property type="match status" value="1"/>
</dbReference>
<dbReference type="NCBIfam" id="NF003516">
    <property type="entry name" value="PRK05182.2-2"/>
    <property type="match status" value="1"/>
</dbReference>
<dbReference type="NCBIfam" id="NF003519">
    <property type="entry name" value="PRK05182.2-5"/>
    <property type="match status" value="1"/>
</dbReference>
<dbReference type="NCBIfam" id="TIGR02027">
    <property type="entry name" value="rpoA"/>
    <property type="match status" value="1"/>
</dbReference>
<dbReference type="Pfam" id="PF01000">
    <property type="entry name" value="RNA_pol_A_bac"/>
    <property type="match status" value="1"/>
</dbReference>
<dbReference type="Pfam" id="PF03118">
    <property type="entry name" value="RNA_pol_A_CTD"/>
    <property type="match status" value="1"/>
</dbReference>
<dbReference type="Pfam" id="PF01193">
    <property type="entry name" value="RNA_pol_L"/>
    <property type="match status" value="1"/>
</dbReference>
<dbReference type="SMART" id="SM00662">
    <property type="entry name" value="RPOLD"/>
    <property type="match status" value="1"/>
</dbReference>
<dbReference type="SUPFAM" id="SSF47789">
    <property type="entry name" value="C-terminal domain of RNA polymerase alpha subunit"/>
    <property type="match status" value="1"/>
</dbReference>
<dbReference type="SUPFAM" id="SSF56553">
    <property type="entry name" value="Insert subdomain of RNA polymerase alpha subunit"/>
    <property type="match status" value="1"/>
</dbReference>
<dbReference type="SUPFAM" id="SSF55257">
    <property type="entry name" value="RBP11-like subunits of RNA polymerase"/>
    <property type="match status" value="1"/>
</dbReference>
<keyword id="KW-0002">3D-structure</keyword>
<keyword id="KW-0240">DNA-directed RNA polymerase</keyword>
<keyword id="KW-0548">Nucleotidyltransferase</keyword>
<keyword id="KW-1185">Reference proteome</keyword>
<keyword id="KW-0804">Transcription</keyword>
<keyword id="KW-0808">Transferase</keyword>
<reference key="1">
    <citation type="submission" date="2005-08" db="EMBL/GenBank/DDBJ databases">
        <title>Complete sequence of chromosome 1 of Synechococcus elongatus PCC 7942.</title>
        <authorList>
            <consortium name="US DOE Joint Genome Institute"/>
            <person name="Copeland A."/>
            <person name="Lucas S."/>
            <person name="Lapidus A."/>
            <person name="Barry K."/>
            <person name="Detter J.C."/>
            <person name="Glavina T."/>
            <person name="Hammon N."/>
            <person name="Israni S."/>
            <person name="Pitluck S."/>
            <person name="Schmutz J."/>
            <person name="Larimer F."/>
            <person name="Land M."/>
            <person name="Kyrpides N."/>
            <person name="Lykidis A."/>
            <person name="Golden S."/>
            <person name="Richardson P."/>
        </authorList>
    </citation>
    <scope>NUCLEOTIDE SEQUENCE [LARGE SCALE GENOMIC DNA]</scope>
    <source>
        <strain>ATCC 33912 / PCC 7942 / FACHB-805</strain>
    </source>
</reference>
<evidence type="ECO:0000255" key="1">
    <source>
        <dbReference type="HAMAP-Rule" id="MF_00059"/>
    </source>
</evidence>
<evidence type="ECO:0007829" key="2">
    <source>
        <dbReference type="PDB" id="8SYI"/>
    </source>
</evidence>
<evidence type="ECO:0007829" key="3">
    <source>
        <dbReference type="PDB" id="8URW"/>
    </source>
</evidence>
<sequence>MTFQVECVESRTEADQGQYGRFSIEPLARGQGTTVGNALRRVLLSNLEGTAVTAVRIGGVNHEFATIPGVREDVLDILLNVRELVVHAHSPQPQIGRLRVVGPATVTAADVDFGPEVEVINPNHYIASLSEGATLEMELKVEWGTGYRAIDRSHDETTALDFLQLDAVFMPVRRVNYSVEDARVGESTAIDRLVLEVWTNGSLSPQEALSQAASCLVALFEPLKNVSVGSTHTADPEPTPESQTPIEDLQLSVRAYNCLKRAQVNSVADLLSYTYEDLLEIKNFGQKSAEEVVEALERIGIKLQESKVS</sequence>
<gene>
    <name evidence="1" type="primary">rpoA</name>
    <name type="ordered locus">Synpcc7942_2209</name>
</gene>
<organism>
    <name type="scientific">Synechococcus elongatus (strain ATCC 33912 / PCC 7942 / FACHB-805)</name>
    <name type="common">Anacystis nidulans R2</name>
    <dbReference type="NCBI Taxonomy" id="1140"/>
    <lineage>
        <taxon>Bacteria</taxon>
        <taxon>Bacillati</taxon>
        <taxon>Cyanobacteriota</taxon>
        <taxon>Cyanophyceae</taxon>
        <taxon>Synechococcales</taxon>
        <taxon>Synechococcaceae</taxon>
        <taxon>Synechococcus</taxon>
    </lineage>
</organism>
<feature type="chain" id="PRO_0000264562" description="DNA-directed RNA polymerase subunit alpha">
    <location>
        <begin position="1"/>
        <end position="309"/>
    </location>
</feature>
<feature type="region of interest" description="Alpha N-terminal domain (alpha-NTD)" evidence="1">
    <location>
        <begin position="1"/>
        <end position="227"/>
    </location>
</feature>
<feature type="region of interest" description="Alpha C-terminal domain (alpha-CTD)" evidence="1">
    <location>
        <begin position="237"/>
        <end position="309"/>
    </location>
</feature>
<feature type="strand" evidence="3">
    <location>
        <begin position="4"/>
        <end position="12"/>
    </location>
</feature>
<feature type="strand" evidence="3">
    <location>
        <begin position="14"/>
        <end position="16"/>
    </location>
</feature>
<feature type="strand" evidence="3">
    <location>
        <begin position="18"/>
        <end position="27"/>
    </location>
</feature>
<feature type="helix" evidence="3">
    <location>
        <begin position="31"/>
        <end position="45"/>
    </location>
</feature>
<feature type="strand" evidence="3">
    <location>
        <begin position="49"/>
        <end position="57"/>
    </location>
</feature>
<feature type="strand" evidence="3">
    <location>
        <begin position="70"/>
        <end position="72"/>
    </location>
</feature>
<feature type="helix" evidence="3">
    <location>
        <begin position="74"/>
        <end position="82"/>
    </location>
</feature>
<feature type="strand" evidence="3">
    <location>
        <begin position="86"/>
        <end position="92"/>
    </location>
</feature>
<feature type="strand" evidence="3">
    <location>
        <begin position="94"/>
        <end position="107"/>
    </location>
</feature>
<feature type="helix" evidence="3">
    <location>
        <begin position="108"/>
        <end position="110"/>
    </location>
</feature>
<feature type="strand" evidence="3">
    <location>
        <begin position="117"/>
        <end position="120"/>
    </location>
</feature>
<feature type="strand" evidence="3">
    <location>
        <begin position="125"/>
        <end position="129"/>
    </location>
</feature>
<feature type="strand" evidence="3">
    <location>
        <begin position="134"/>
        <end position="144"/>
    </location>
</feature>
<feature type="strand" evidence="3">
    <location>
        <begin position="146"/>
        <end position="148"/>
    </location>
</feature>
<feature type="strand" evidence="2">
    <location>
        <begin position="157"/>
        <end position="159"/>
    </location>
</feature>
<feature type="strand" evidence="3">
    <location>
        <begin position="167"/>
        <end position="169"/>
    </location>
</feature>
<feature type="strand" evidence="3">
    <location>
        <begin position="172"/>
        <end position="181"/>
    </location>
</feature>
<feature type="strand" evidence="2">
    <location>
        <begin position="185"/>
        <end position="187"/>
    </location>
</feature>
<feature type="strand" evidence="3">
    <location>
        <begin position="191"/>
        <end position="199"/>
    </location>
</feature>
<feature type="strand" evidence="3">
    <location>
        <begin position="201"/>
        <end position="203"/>
    </location>
</feature>
<feature type="helix" evidence="3">
    <location>
        <begin position="205"/>
        <end position="220"/>
    </location>
</feature>
<feature type="helix" evidence="3">
    <location>
        <begin position="221"/>
        <end position="223"/>
    </location>
</feature>
<comment type="function">
    <text evidence="1">DNA-dependent RNA polymerase catalyzes the transcription of DNA into RNA using the four ribonucleoside triphosphates as substrates.</text>
</comment>
<comment type="catalytic activity">
    <reaction evidence="1">
        <text>RNA(n) + a ribonucleoside 5'-triphosphate = RNA(n+1) + diphosphate</text>
        <dbReference type="Rhea" id="RHEA:21248"/>
        <dbReference type="Rhea" id="RHEA-COMP:14527"/>
        <dbReference type="Rhea" id="RHEA-COMP:17342"/>
        <dbReference type="ChEBI" id="CHEBI:33019"/>
        <dbReference type="ChEBI" id="CHEBI:61557"/>
        <dbReference type="ChEBI" id="CHEBI:140395"/>
        <dbReference type="EC" id="2.7.7.6"/>
    </reaction>
</comment>
<comment type="subunit">
    <text evidence="1">In cyanobacteria the RNAP catalytic core is composed of 2 alpha, 1 beta, 1 beta', 1 gamma and 1 omega subunit. When a sigma factor is associated with the core the holoenzyme is formed, which can initiate transcription.</text>
</comment>
<comment type="domain">
    <text evidence="1">The N-terminal domain is essential for RNAP assembly and basal transcription, whereas the C-terminal domain is involved in interaction with transcriptional regulators and with upstream promoter elements.</text>
</comment>
<comment type="similarity">
    <text evidence="1">Belongs to the RNA polymerase alpha chain family.</text>
</comment>
<accession>Q31L30</accession>
<proteinExistence type="evidence at protein level"/>